<dbReference type="EMBL" id="AL935263">
    <property type="protein sequence ID" value="CCC79716.1"/>
    <property type="molecule type" value="Genomic_DNA"/>
</dbReference>
<dbReference type="RefSeq" id="WP_003644683.1">
    <property type="nucleotide sequence ID" value="NC_004567.2"/>
</dbReference>
<dbReference type="RefSeq" id="YP_004890230.1">
    <property type="nucleotide sequence ID" value="NC_004567.2"/>
</dbReference>
<dbReference type="SMR" id="Q88UD8"/>
<dbReference type="STRING" id="220668.lp_2561"/>
<dbReference type="DNASU" id="1062763"/>
<dbReference type="EnsemblBacteria" id="CCC79716">
    <property type="protein sequence ID" value="CCC79716"/>
    <property type="gene ID" value="lp_2561"/>
</dbReference>
<dbReference type="KEGG" id="lpl:lp_2561"/>
<dbReference type="PATRIC" id="fig|220668.9.peg.2152"/>
<dbReference type="eggNOG" id="COG3705">
    <property type="taxonomic scope" value="Bacteria"/>
</dbReference>
<dbReference type="HOGENOM" id="CLU_025113_0_0_9"/>
<dbReference type="OrthoDB" id="9800814at2"/>
<dbReference type="PhylomeDB" id="Q88UD8"/>
<dbReference type="UniPathway" id="UPA00031">
    <property type="reaction ID" value="UER00006"/>
</dbReference>
<dbReference type="Proteomes" id="UP000000432">
    <property type="component" value="Chromosome"/>
</dbReference>
<dbReference type="GO" id="GO:0005737">
    <property type="term" value="C:cytoplasm"/>
    <property type="evidence" value="ECO:0007669"/>
    <property type="project" value="UniProtKB-SubCell"/>
</dbReference>
<dbReference type="GO" id="GO:0140096">
    <property type="term" value="F:catalytic activity, acting on a protein"/>
    <property type="evidence" value="ECO:0007669"/>
    <property type="project" value="UniProtKB-ARBA"/>
</dbReference>
<dbReference type="GO" id="GO:0004821">
    <property type="term" value="F:histidine-tRNA ligase activity"/>
    <property type="evidence" value="ECO:0007669"/>
    <property type="project" value="TreeGrafter"/>
</dbReference>
<dbReference type="GO" id="GO:0016740">
    <property type="term" value="F:transferase activity"/>
    <property type="evidence" value="ECO:0007669"/>
    <property type="project" value="UniProtKB-ARBA"/>
</dbReference>
<dbReference type="GO" id="GO:0006427">
    <property type="term" value="P:histidyl-tRNA aminoacylation"/>
    <property type="evidence" value="ECO:0007669"/>
    <property type="project" value="TreeGrafter"/>
</dbReference>
<dbReference type="GO" id="GO:0000105">
    <property type="term" value="P:L-histidine biosynthetic process"/>
    <property type="evidence" value="ECO:0007669"/>
    <property type="project" value="UniProtKB-UniRule"/>
</dbReference>
<dbReference type="CDD" id="cd00773">
    <property type="entry name" value="HisRS-like_core"/>
    <property type="match status" value="1"/>
</dbReference>
<dbReference type="Gene3D" id="3.30.930.10">
    <property type="entry name" value="Bira Bifunctional Protein, Domain 2"/>
    <property type="match status" value="1"/>
</dbReference>
<dbReference type="HAMAP" id="MF_00125">
    <property type="entry name" value="HisZ"/>
    <property type="match status" value="1"/>
</dbReference>
<dbReference type="InterPro" id="IPR045864">
    <property type="entry name" value="aa-tRNA-synth_II/BPL/LPL"/>
</dbReference>
<dbReference type="InterPro" id="IPR041715">
    <property type="entry name" value="HisRS-like_core"/>
</dbReference>
<dbReference type="InterPro" id="IPR004516">
    <property type="entry name" value="HisRS/HisZ"/>
</dbReference>
<dbReference type="InterPro" id="IPR004517">
    <property type="entry name" value="HisZ"/>
</dbReference>
<dbReference type="NCBIfam" id="TIGR00443">
    <property type="entry name" value="hisZ_biosyn_reg"/>
    <property type="match status" value="1"/>
</dbReference>
<dbReference type="PANTHER" id="PTHR43707:SF6">
    <property type="entry name" value="ATP PHOSPHORIBOSYLTRANSFERASE REGULATORY SUBUNIT"/>
    <property type="match status" value="1"/>
</dbReference>
<dbReference type="PANTHER" id="PTHR43707">
    <property type="entry name" value="HISTIDYL-TRNA SYNTHETASE"/>
    <property type="match status" value="1"/>
</dbReference>
<dbReference type="Pfam" id="PF13393">
    <property type="entry name" value="tRNA-synt_His"/>
    <property type="match status" value="1"/>
</dbReference>
<dbReference type="PIRSF" id="PIRSF001549">
    <property type="entry name" value="His-tRNA_synth"/>
    <property type="match status" value="1"/>
</dbReference>
<dbReference type="SUPFAM" id="SSF55681">
    <property type="entry name" value="Class II aaRS and biotin synthetases"/>
    <property type="match status" value="1"/>
</dbReference>
<comment type="function">
    <text evidence="1">Required for the first step of histidine biosynthesis. May allow the feedback regulation of ATP phosphoribosyltransferase activity by histidine.</text>
</comment>
<comment type="pathway">
    <text evidence="1">Amino-acid biosynthesis; L-histidine biosynthesis; L-histidine from 5-phospho-alpha-D-ribose 1-diphosphate: step 1/9.</text>
</comment>
<comment type="subunit">
    <text evidence="1">Heteromultimer composed of HisG and HisZ subunits.</text>
</comment>
<comment type="subcellular location">
    <subcellularLocation>
        <location evidence="1">Cytoplasm</location>
    </subcellularLocation>
</comment>
<comment type="miscellaneous">
    <text>This function is generally fulfilled by the C-terminal part of HisG, which is missing in some bacteria such as this one.</text>
</comment>
<comment type="similarity">
    <text evidence="1">Belongs to the class-II aminoacyl-tRNA synthetase family. HisZ subfamily.</text>
</comment>
<name>HISZ_LACPL</name>
<feature type="chain" id="PRO_0000171039" description="ATP phosphoribosyltransferase regulatory subunit">
    <location>
        <begin position="1"/>
        <end position="383"/>
    </location>
</feature>
<accession>Q88UD8</accession>
<accession>F9UR77</accession>
<keyword id="KW-0028">Amino-acid biosynthesis</keyword>
<keyword id="KW-0963">Cytoplasm</keyword>
<keyword id="KW-0368">Histidine biosynthesis</keyword>
<keyword id="KW-1185">Reference proteome</keyword>
<sequence>MLKHLLPLGTRDEFGRRARTKQHLIAVIQAHFKQRGLAPIATPLLENEAVFDPYQMGNYQLYRLFGNDGRTLVLRPDMTLPVARFISATNVPLPQKFGYVGDIFRVSRQLSGSYNQITQAGVELVGYASLKAEFECLTIANQLSSELIADAVEIELGDAQFAQRVVASLTGDEGEQQAILTALFDKQVPRYTKLIAKYRAQPLYDFLKAWPRLFGRPECIFKELAAAPLPETVQPSLKRLQTVVAWMQQTMPEQVISVDLSSQAPQKYYTGLTFRGYSQAGAGYLFSGGRYDKLLTNFQAEAEPAVGMGLNVDLLTTLATDQQTAYAEQLIYFEPEQWSQAEAYLAKQPHAILSLADDLAGARIEAQRLNAQLIDLTGGMTND</sequence>
<protein>
    <recommendedName>
        <fullName evidence="1">ATP phosphoribosyltransferase regulatory subunit</fullName>
    </recommendedName>
</protein>
<reference key="1">
    <citation type="journal article" date="2003" name="Proc. Natl. Acad. Sci. U.S.A.">
        <title>Complete genome sequence of Lactobacillus plantarum WCFS1.</title>
        <authorList>
            <person name="Kleerebezem M."/>
            <person name="Boekhorst J."/>
            <person name="van Kranenburg R."/>
            <person name="Molenaar D."/>
            <person name="Kuipers O.P."/>
            <person name="Leer R."/>
            <person name="Tarchini R."/>
            <person name="Peters S.A."/>
            <person name="Sandbrink H.M."/>
            <person name="Fiers M.W.E.J."/>
            <person name="Stiekema W."/>
            <person name="Klein Lankhorst R.M."/>
            <person name="Bron P.A."/>
            <person name="Hoffer S.M."/>
            <person name="Nierop Groot M.N."/>
            <person name="Kerkhoven R."/>
            <person name="De Vries M."/>
            <person name="Ursing B."/>
            <person name="De Vos W.M."/>
            <person name="Siezen R.J."/>
        </authorList>
    </citation>
    <scope>NUCLEOTIDE SEQUENCE [LARGE SCALE GENOMIC DNA]</scope>
    <source>
        <strain>ATCC BAA-793 / NCIMB 8826 / WCFS1</strain>
    </source>
</reference>
<reference key="2">
    <citation type="journal article" date="2012" name="J. Bacteriol.">
        <title>Complete resequencing and reannotation of the Lactobacillus plantarum WCFS1 genome.</title>
        <authorList>
            <person name="Siezen R.J."/>
            <person name="Francke C."/>
            <person name="Renckens B."/>
            <person name="Boekhorst J."/>
            <person name="Wels M."/>
            <person name="Kleerebezem M."/>
            <person name="van Hijum S.A."/>
        </authorList>
    </citation>
    <scope>NUCLEOTIDE SEQUENCE [LARGE SCALE GENOMIC DNA]</scope>
    <scope>GENOME REANNOTATION</scope>
    <source>
        <strain>ATCC BAA-793 / NCIMB 8826 / WCFS1</strain>
    </source>
</reference>
<evidence type="ECO:0000255" key="1">
    <source>
        <dbReference type="HAMAP-Rule" id="MF_00125"/>
    </source>
</evidence>
<organism>
    <name type="scientific">Lactiplantibacillus plantarum (strain ATCC BAA-793 / NCIMB 8826 / WCFS1)</name>
    <name type="common">Lactobacillus plantarum</name>
    <dbReference type="NCBI Taxonomy" id="220668"/>
    <lineage>
        <taxon>Bacteria</taxon>
        <taxon>Bacillati</taxon>
        <taxon>Bacillota</taxon>
        <taxon>Bacilli</taxon>
        <taxon>Lactobacillales</taxon>
        <taxon>Lactobacillaceae</taxon>
        <taxon>Lactiplantibacillus</taxon>
    </lineage>
</organism>
<proteinExistence type="inferred from homology"/>
<gene>
    <name evidence="1" type="primary">hisZ</name>
    <name type="synonym">hisX</name>
    <name type="ordered locus">lp_2561</name>
</gene>